<dbReference type="EMBL" id="AF210241">
    <property type="protein sequence ID" value="AAF17252.1"/>
    <property type="molecule type" value="Genomic_DNA"/>
</dbReference>
<dbReference type="EMBL" id="AF210242">
    <property type="protein sequence ID" value="AAF17253.1"/>
    <property type="molecule type" value="mRNA"/>
</dbReference>
<dbReference type="EMBL" id="AF184223">
    <property type="protein sequence ID" value="AAG10397.1"/>
    <property type="molecule type" value="mRNA"/>
</dbReference>
<dbReference type="PDB" id="1Z64">
    <property type="method" value="NMR"/>
    <property type="chains" value="A=23-47"/>
</dbReference>
<dbReference type="PDB" id="2LS9">
    <property type="method" value="NMR"/>
    <property type="chains" value="A=23-47"/>
</dbReference>
<dbReference type="PDB" id="6RSG">
    <property type="method" value="NMR"/>
    <property type="chains" value="A=23-47"/>
</dbReference>
<dbReference type="PDBsum" id="1Z64"/>
<dbReference type="PDBsum" id="2LS9"/>
<dbReference type="PDBsum" id="6RSG"/>
<dbReference type="BMRB" id="P81941"/>
<dbReference type="SMR" id="P81941"/>
<dbReference type="EvolutionaryTrace" id="P81941"/>
<dbReference type="GO" id="GO:0005576">
    <property type="term" value="C:extracellular region"/>
    <property type="evidence" value="ECO:0007669"/>
    <property type="project" value="UniProtKB-SubCell"/>
</dbReference>
<dbReference type="GO" id="GO:0016020">
    <property type="term" value="C:membrane"/>
    <property type="evidence" value="ECO:0007669"/>
    <property type="project" value="UniProtKB-SubCell"/>
</dbReference>
<dbReference type="GO" id="GO:0008289">
    <property type="term" value="F:lipid binding"/>
    <property type="evidence" value="ECO:0007669"/>
    <property type="project" value="UniProtKB-KW"/>
</dbReference>
<dbReference type="GO" id="GO:0042742">
    <property type="term" value="P:defense response to bacterium"/>
    <property type="evidence" value="ECO:0007669"/>
    <property type="project" value="UniProtKB-KW"/>
</dbReference>
<dbReference type="InterPro" id="IPR012515">
    <property type="entry name" value="Antimicrobial12"/>
</dbReference>
<dbReference type="Pfam" id="PF08107">
    <property type="entry name" value="Antimicrobial12"/>
    <property type="match status" value="1"/>
</dbReference>
<proteinExistence type="evidence at protein level"/>
<accession>P81941</accession>
<accession>P81619</accession>
<accession>Q9PRJ9</accession>
<protein>
    <recommendedName>
        <fullName>Pleurocidin</fullName>
    </recommendedName>
</protein>
<keyword id="KW-0002">3D-structure</keyword>
<keyword id="KW-0044">Antibiotic</keyword>
<keyword id="KW-0929">Antimicrobial</keyword>
<keyword id="KW-0903">Direct protein sequencing</keyword>
<keyword id="KW-0446">Lipid-binding</keyword>
<keyword id="KW-0472">Membrane</keyword>
<keyword id="KW-0964">Secreted</keyword>
<keyword id="KW-0732">Signal</keyword>
<reference key="1">
    <citation type="journal article" date="2000" name="Antimicrob. Agents Chemother.">
        <title>Characterization of a fish antimicrobial peptide: gene expression, subcellular localization, and spectrum of activity.</title>
        <authorList>
            <person name="Cole A.M."/>
            <person name="Darouiche R.O."/>
            <person name="Legarda D."/>
            <person name="Connell N."/>
            <person name="Diamond G."/>
        </authorList>
    </citation>
    <scope>NUCLEOTIDE SEQUENCE [GENOMIC DNA / MRNA]</scope>
    <source>
        <tissue>Skin</tissue>
        <tissue>Small intestine</tissue>
    </source>
</reference>
<reference key="2">
    <citation type="journal article" date="2001" name="Dev. Comp. Immunol.">
        <title>Cloning and developmental expression of a family of pleurocidin-like antimicrobial peptides from winter flounder, Pleuronectes americanus (Walbaum).</title>
        <authorList>
            <person name="Douglas S.E."/>
            <person name="Gallant J.W."/>
            <person name="Gong Z."/>
            <person name="Hew C.-L."/>
        </authorList>
    </citation>
    <scope>NUCLEOTIDE SEQUENCE [MRNA]</scope>
    <source>
        <tissue>Skin</tissue>
    </source>
</reference>
<reference key="3">
    <citation type="journal article" date="1997" name="J. Biol. Chem.">
        <title>Isolation and characterization of pleurocidin, an antimicrobial peptide in the skin secretions of winter flounder.</title>
        <authorList>
            <person name="Cole A.M."/>
            <person name="Weis P."/>
            <person name="Diamond G."/>
        </authorList>
    </citation>
    <scope>PROTEIN SEQUENCE OF 23-47</scope>
    <scope>CHARACTERIZATION</scope>
    <source>
        <tissue>Epidermis</tissue>
        <tissue>Skin mucus</tissue>
    </source>
</reference>
<reference key="4">
    <citation type="journal article" date="2005" name="Biochemistry">
        <title>Structural characterization of the antimicrobial peptide pleurocidin from winter flounder.</title>
        <authorList>
            <person name="Syvitski R.T."/>
            <person name="Burton I."/>
            <person name="Mattatall N.R."/>
            <person name="Douglas S.E."/>
            <person name="Jakeman D.L."/>
        </authorList>
    </citation>
    <scope>STRUCTURE BY NMR OF 23-47</scope>
    <scope>LIPID-BINDING</scope>
    <scope>SUBCELLULAR LOCATION</scope>
</reference>
<gene>
    <name type="primary">ple1</name>
</gene>
<feature type="signal peptide" evidence="2">
    <location>
        <begin position="1"/>
        <end position="22"/>
    </location>
</feature>
<feature type="peptide" id="PRO_0000000273" description="Pleurocidin">
    <location>
        <begin position="23"/>
        <end position="47"/>
    </location>
</feature>
<feature type="propeptide" id="PRO_0000000274">
    <location>
        <begin position="48"/>
        <end position="68"/>
    </location>
</feature>
<feature type="sequence conflict" description="In Ref. 3; AA sequence." evidence="3" ref="3">
    <original>TH</original>
    <variation>HT</variation>
    <location>
        <begin position="44"/>
        <end position="45"/>
    </location>
</feature>
<feature type="helix" evidence="5">
    <location>
        <begin position="25"/>
        <end position="42"/>
    </location>
</feature>
<feature type="turn" evidence="5">
    <location>
        <begin position="43"/>
        <end position="46"/>
    </location>
</feature>
<name>PLE1_PSEAM</name>
<sequence length="68" mass="7601">MKFTATFLMMAIFVLMVEPGECGWGSFFKKAAHVGKHVGKAALTHYLGDKQELNKRAVDEDPNVIVFE</sequence>
<organism>
    <name type="scientific">Pseudopleuronectes americanus</name>
    <name type="common">Winter flounder</name>
    <name type="synonym">Pleuronectes americanus</name>
    <dbReference type="NCBI Taxonomy" id="8265"/>
    <lineage>
        <taxon>Eukaryota</taxon>
        <taxon>Metazoa</taxon>
        <taxon>Chordata</taxon>
        <taxon>Craniata</taxon>
        <taxon>Vertebrata</taxon>
        <taxon>Euteleostomi</taxon>
        <taxon>Actinopterygii</taxon>
        <taxon>Neopterygii</taxon>
        <taxon>Teleostei</taxon>
        <taxon>Neoteleostei</taxon>
        <taxon>Acanthomorphata</taxon>
        <taxon>Carangaria</taxon>
        <taxon>Pleuronectiformes</taxon>
        <taxon>Pleuronectoidei</taxon>
        <taxon>Pleuronectidae</taxon>
        <taxon>Pseudopleuronectes</taxon>
    </lineage>
</organism>
<evidence type="ECO:0000269" key="1">
    <source>
    </source>
</evidence>
<evidence type="ECO:0000269" key="2">
    <source>
    </source>
</evidence>
<evidence type="ECO:0000305" key="3"/>
<evidence type="ECO:0000305" key="4">
    <source>
    </source>
</evidence>
<evidence type="ECO:0007829" key="5">
    <source>
        <dbReference type="PDB" id="1Z64"/>
    </source>
</evidence>
<comment type="function">
    <text>Antimicrobial peptide with potent activity against Gram-positive and Gram-negative bacteria. Activity against E.coli and B.subtilis. Weaker activity against L.mucor, s.marcescens and P.aeruginosa. May play a role in innate host defense.</text>
</comment>
<comment type="subcellular location">
    <subcellularLocation>
        <location evidence="1">Secreted</location>
    </subcellularLocation>
    <subcellularLocation>
        <location evidence="1">Membrane</location>
        <topology evidence="1">Peripheral membrane protein</topology>
    </subcellularLocation>
    <text>Associates with phospholipid membranes via its amphipathic helix and can insert into the lipid bilayer.</text>
</comment>
<comment type="tissue specificity">
    <text>Goblet cells.</text>
</comment>
<comment type="miscellaneous">
    <text evidence="4">The peptide is disordered in aqueous solution.</text>
</comment>
<comment type="similarity">
    <text evidence="3">Belongs to the pleurocidin family.</text>
</comment>